<proteinExistence type="inferred from homology"/>
<accession>C4ZVU9</accession>
<reference key="1">
    <citation type="journal article" date="2009" name="J. Bacteriol.">
        <title>Genomic sequencing reveals regulatory mutations and recombinational events in the widely used MC4100 lineage of Escherichia coli K-12.</title>
        <authorList>
            <person name="Ferenci T."/>
            <person name="Zhou Z."/>
            <person name="Betteridge T."/>
            <person name="Ren Y."/>
            <person name="Liu Y."/>
            <person name="Feng L."/>
            <person name="Reeves P.R."/>
            <person name="Wang L."/>
        </authorList>
    </citation>
    <scope>NUCLEOTIDE SEQUENCE [LARGE SCALE GENOMIC DNA]</scope>
    <source>
        <strain>K12 / MC4100 / BW2952</strain>
    </source>
</reference>
<protein>
    <recommendedName>
        <fullName evidence="1">Pyridoxine/pyridoxal/pyridoxamine kinase</fullName>
        <shortName evidence="1">PN/PL/PM kinase</shortName>
        <ecNumber evidence="1">2.7.1.35</ecNumber>
    </recommendedName>
    <alternativeName>
        <fullName evidence="1">B6-vitamer kinase</fullName>
    </alternativeName>
</protein>
<gene>
    <name evidence="1" type="primary">pdxK</name>
    <name type="ordered locus">BWG_2180</name>
</gene>
<comment type="function">
    <text evidence="1">B6-vitamer kinase involved in the salvage pathway of pyridoxal 5'-phosphate (PLP). Catalyzes the phosphorylation of pyridoxine (PN), pyridoxal (PL), and pyridoxamine (PM), forming their respective 5'-phosphorylated esters, i.e. PNP, PLP and PMP.</text>
</comment>
<comment type="catalytic activity">
    <reaction evidence="1">
        <text>pyridoxal + ATP = pyridoxal 5'-phosphate + ADP + H(+)</text>
        <dbReference type="Rhea" id="RHEA:10224"/>
        <dbReference type="ChEBI" id="CHEBI:15378"/>
        <dbReference type="ChEBI" id="CHEBI:17310"/>
        <dbReference type="ChEBI" id="CHEBI:30616"/>
        <dbReference type="ChEBI" id="CHEBI:456216"/>
        <dbReference type="ChEBI" id="CHEBI:597326"/>
        <dbReference type="EC" id="2.7.1.35"/>
    </reaction>
</comment>
<comment type="catalytic activity">
    <reaction evidence="1">
        <text>pyridoxine + ATP = pyridoxine 5'-phosphate + ADP + H(+)</text>
        <dbReference type="Rhea" id="RHEA:25108"/>
        <dbReference type="ChEBI" id="CHEBI:15378"/>
        <dbReference type="ChEBI" id="CHEBI:16709"/>
        <dbReference type="ChEBI" id="CHEBI:30616"/>
        <dbReference type="ChEBI" id="CHEBI:58589"/>
        <dbReference type="ChEBI" id="CHEBI:456216"/>
        <dbReference type="EC" id="2.7.1.35"/>
    </reaction>
</comment>
<comment type="catalytic activity">
    <reaction evidence="1">
        <text>pyridoxamine + ATP = pyridoxamine 5'-phosphate + ADP + H(+)</text>
        <dbReference type="Rhea" id="RHEA:25104"/>
        <dbReference type="ChEBI" id="CHEBI:15378"/>
        <dbReference type="ChEBI" id="CHEBI:30616"/>
        <dbReference type="ChEBI" id="CHEBI:57761"/>
        <dbReference type="ChEBI" id="CHEBI:58451"/>
        <dbReference type="ChEBI" id="CHEBI:456216"/>
        <dbReference type="EC" id="2.7.1.35"/>
    </reaction>
</comment>
<comment type="cofactor">
    <cofactor evidence="1">
        <name>Mg(2+)</name>
        <dbReference type="ChEBI" id="CHEBI:18420"/>
    </cofactor>
</comment>
<comment type="pathway">
    <text evidence="1">Cofactor metabolism; pyridoxal 5'-phosphate salvage; pyridoxal 5'-phosphate from pyridoxal: step 1/1.</text>
</comment>
<comment type="pathway">
    <text evidence="1">Cofactor metabolism; pyridoxal 5'-phosphate salvage; pyridoxine 5'-phosphate from pyridoxine: step 1/1.</text>
</comment>
<comment type="pathway">
    <text evidence="1">Cofactor metabolism; pyridoxal 5'-phosphate salvage; pyridoxamine 5'-phosphate from pyridoxamine: step 1/1.</text>
</comment>
<comment type="subunit">
    <text evidence="1">Homodimer.</text>
</comment>
<comment type="similarity">
    <text evidence="1">Belongs to the pyridoxine kinase family. PdxK subfamily.</text>
</comment>
<sequence length="283" mass="30847">MSSLLLFNDKSRALQADIVAVQSQVVYGSVGNSIAVPAIKQNGLNVFAVPTVLLSNTPHYDTFYGGAIPDEWFSGYLRALQERDALRQLRAVTTGYMGTASQIKILAEWLTALRKDHPDLLIMVDPVIGDIDSGIYVKPDLPEAYRQYLLPLAQGITPNIFELEILTGKNCRDLDSAIAAAKSLLSDTLKWVVVTSASGNEENQEMQVVVVTADSVNVISHSRVKTDLKGTGDLFCAQLISGLLKGKALTDAVHRAGLRVLEVMRYTQQHESDELILPPLAEA</sequence>
<organism>
    <name type="scientific">Escherichia coli (strain K12 / MC4100 / BW2952)</name>
    <dbReference type="NCBI Taxonomy" id="595496"/>
    <lineage>
        <taxon>Bacteria</taxon>
        <taxon>Pseudomonadati</taxon>
        <taxon>Pseudomonadota</taxon>
        <taxon>Gammaproteobacteria</taxon>
        <taxon>Enterobacterales</taxon>
        <taxon>Enterobacteriaceae</taxon>
        <taxon>Escherichia</taxon>
    </lineage>
</organism>
<name>PDXK_ECOBW</name>
<evidence type="ECO:0000255" key="1">
    <source>
        <dbReference type="HAMAP-Rule" id="MF_01638"/>
    </source>
</evidence>
<feature type="chain" id="PRO_1000215821" description="Pyridoxine/pyridoxal/pyridoxamine kinase">
    <location>
        <begin position="1"/>
        <end position="283"/>
    </location>
</feature>
<feature type="binding site" evidence="1">
    <location>
        <position position="23"/>
    </location>
    <ligand>
        <name>substrate</name>
    </ligand>
</feature>
<feature type="binding site" evidence="1">
    <location>
        <position position="59"/>
    </location>
    <ligand>
        <name>substrate</name>
    </ligand>
</feature>
<feature type="binding site" evidence="1">
    <location>
        <position position="125"/>
    </location>
    <ligand>
        <name>ATP</name>
        <dbReference type="ChEBI" id="CHEBI:30616"/>
    </ligand>
</feature>
<feature type="binding site" evidence="1">
    <location>
        <position position="136"/>
    </location>
    <ligand>
        <name>Mg(2+)</name>
        <dbReference type="ChEBI" id="CHEBI:18420"/>
    </ligand>
</feature>
<feature type="binding site" evidence="1">
    <location>
        <position position="157"/>
    </location>
    <ligand>
        <name>ATP</name>
        <dbReference type="ChEBI" id="CHEBI:30616"/>
    </ligand>
</feature>
<feature type="binding site" evidence="1">
    <location>
        <position position="162"/>
    </location>
    <ligand>
        <name>ATP</name>
        <dbReference type="ChEBI" id="CHEBI:30616"/>
    </ligand>
</feature>
<feature type="binding site" evidence="1">
    <location>
        <position position="162"/>
    </location>
    <ligand>
        <name>Mg(2+)</name>
        <dbReference type="ChEBI" id="CHEBI:18420"/>
    </ligand>
</feature>
<feature type="binding site" evidence="1">
    <location>
        <position position="195"/>
    </location>
    <ligand>
        <name>ATP</name>
        <dbReference type="ChEBI" id="CHEBI:30616"/>
    </ligand>
</feature>
<feature type="binding site" evidence="1">
    <location>
        <begin position="221"/>
        <end position="224"/>
    </location>
    <ligand>
        <name>ATP</name>
        <dbReference type="ChEBI" id="CHEBI:30616"/>
    </ligand>
</feature>
<feature type="binding site" evidence="1">
    <location>
        <position position="231"/>
    </location>
    <ligand>
        <name>ATP</name>
        <dbReference type="ChEBI" id="CHEBI:30616"/>
    </ligand>
</feature>
<feature type="binding site" evidence="1">
    <location>
        <position position="233"/>
    </location>
    <ligand>
        <name>substrate</name>
    </ligand>
</feature>
<keyword id="KW-0067">ATP-binding</keyword>
<keyword id="KW-0418">Kinase</keyword>
<keyword id="KW-0460">Magnesium</keyword>
<keyword id="KW-0479">Metal-binding</keyword>
<keyword id="KW-0547">Nucleotide-binding</keyword>
<keyword id="KW-0808">Transferase</keyword>
<keyword id="KW-0862">Zinc</keyword>
<dbReference type="EC" id="2.7.1.35" evidence="1"/>
<dbReference type="EMBL" id="CP001396">
    <property type="protein sequence ID" value="ACR65348.1"/>
    <property type="molecule type" value="Genomic_DNA"/>
</dbReference>
<dbReference type="RefSeq" id="WP_000096674.1">
    <property type="nucleotide sequence ID" value="NC_012759.1"/>
</dbReference>
<dbReference type="SMR" id="C4ZVU9"/>
<dbReference type="KEGG" id="ebw:BWG_2180"/>
<dbReference type="HOGENOM" id="CLU_046496_3_1_6"/>
<dbReference type="UniPathway" id="UPA01068">
    <property type="reaction ID" value="UER00298"/>
</dbReference>
<dbReference type="UniPathway" id="UPA01068">
    <property type="reaction ID" value="UER00299"/>
</dbReference>
<dbReference type="UniPathway" id="UPA01068">
    <property type="reaction ID" value="UER00300"/>
</dbReference>
<dbReference type="GO" id="GO:0005829">
    <property type="term" value="C:cytosol"/>
    <property type="evidence" value="ECO:0007669"/>
    <property type="project" value="TreeGrafter"/>
</dbReference>
<dbReference type="GO" id="GO:0005524">
    <property type="term" value="F:ATP binding"/>
    <property type="evidence" value="ECO:0007669"/>
    <property type="project" value="UniProtKB-UniRule"/>
</dbReference>
<dbReference type="GO" id="GO:0008902">
    <property type="term" value="F:hydroxymethylpyrimidine kinase activity"/>
    <property type="evidence" value="ECO:0007669"/>
    <property type="project" value="TreeGrafter"/>
</dbReference>
<dbReference type="GO" id="GO:0000287">
    <property type="term" value="F:magnesium ion binding"/>
    <property type="evidence" value="ECO:0007669"/>
    <property type="project" value="UniProtKB-UniRule"/>
</dbReference>
<dbReference type="GO" id="GO:0008478">
    <property type="term" value="F:pyridoxal kinase activity"/>
    <property type="evidence" value="ECO:0007669"/>
    <property type="project" value="UniProtKB-UniRule"/>
</dbReference>
<dbReference type="GO" id="GO:0008270">
    <property type="term" value="F:zinc ion binding"/>
    <property type="evidence" value="ECO:0007669"/>
    <property type="project" value="UniProtKB-UniRule"/>
</dbReference>
<dbReference type="GO" id="GO:0009443">
    <property type="term" value="P:pyridoxal 5'-phosphate salvage"/>
    <property type="evidence" value="ECO:0007669"/>
    <property type="project" value="UniProtKB-UniRule"/>
</dbReference>
<dbReference type="CDD" id="cd01173">
    <property type="entry name" value="pyridoxal_pyridoxamine_kinase"/>
    <property type="match status" value="1"/>
</dbReference>
<dbReference type="FunFam" id="3.40.1190.20:FF:000009">
    <property type="entry name" value="Pyridoxine/pyridoxal/pyridoxamine kinase"/>
    <property type="match status" value="1"/>
</dbReference>
<dbReference type="Gene3D" id="3.40.1190.20">
    <property type="match status" value="1"/>
</dbReference>
<dbReference type="HAMAP" id="MF_01638">
    <property type="entry name" value="PdxK"/>
    <property type="match status" value="1"/>
</dbReference>
<dbReference type="InterPro" id="IPR023479">
    <property type="entry name" value="PdxK"/>
</dbReference>
<dbReference type="InterPro" id="IPR013749">
    <property type="entry name" value="PM/HMP-P_kinase-1"/>
</dbReference>
<dbReference type="InterPro" id="IPR004625">
    <property type="entry name" value="PyrdxlKinase"/>
</dbReference>
<dbReference type="InterPro" id="IPR029056">
    <property type="entry name" value="Ribokinase-like"/>
</dbReference>
<dbReference type="NCBIfam" id="NF006034">
    <property type="entry name" value="PRK08176.1"/>
    <property type="match status" value="1"/>
</dbReference>
<dbReference type="NCBIfam" id="TIGR00687">
    <property type="entry name" value="pyridox_kin"/>
    <property type="match status" value="1"/>
</dbReference>
<dbReference type="PANTHER" id="PTHR10534">
    <property type="entry name" value="PYRIDOXAL KINASE"/>
    <property type="match status" value="1"/>
</dbReference>
<dbReference type="PANTHER" id="PTHR10534:SF15">
    <property type="entry name" value="PYRIDOXINE_PYRIDOXAL_PYRIDOXAMINE KINASE"/>
    <property type="match status" value="1"/>
</dbReference>
<dbReference type="Pfam" id="PF08543">
    <property type="entry name" value="Phos_pyr_kin"/>
    <property type="match status" value="1"/>
</dbReference>
<dbReference type="SUPFAM" id="SSF53613">
    <property type="entry name" value="Ribokinase-like"/>
    <property type="match status" value="1"/>
</dbReference>